<name>PANB_VESOH</name>
<proteinExistence type="inferred from homology"/>
<evidence type="ECO:0000255" key="1">
    <source>
        <dbReference type="HAMAP-Rule" id="MF_00156"/>
    </source>
</evidence>
<reference key="1">
    <citation type="journal article" date="2007" name="Curr. Biol.">
        <title>Reduced genome of the thioautotrophic intracellular symbiont in a deep-sea clam, Calyptogena okutanii.</title>
        <authorList>
            <person name="Kuwahara H."/>
            <person name="Yoshida T."/>
            <person name="Takaki Y."/>
            <person name="Shimamura S."/>
            <person name="Nishi S."/>
            <person name="Harada M."/>
            <person name="Matsuyama K."/>
            <person name="Takishita K."/>
            <person name="Kawato M."/>
            <person name="Uematsu K."/>
            <person name="Fujiwara Y."/>
            <person name="Sato T."/>
            <person name="Kato C."/>
            <person name="Kitagawa M."/>
            <person name="Kato I."/>
            <person name="Maruyama T."/>
        </authorList>
    </citation>
    <scope>NUCLEOTIDE SEQUENCE [LARGE SCALE GENOMIC DNA]</scope>
    <source>
        <strain>HA</strain>
    </source>
</reference>
<protein>
    <recommendedName>
        <fullName evidence="1">3-methyl-2-oxobutanoate hydroxymethyltransferase</fullName>
        <ecNumber evidence="1">2.1.2.11</ecNumber>
    </recommendedName>
    <alternativeName>
        <fullName evidence="1">Ketopantoate hydroxymethyltransferase</fullName>
        <shortName evidence="1">KPHMT</shortName>
    </alternativeName>
</protein>
<sequence length="260" mass="28082">MNIEALKVFKESGEKITCLTAYDASFASVFDACGIDIILVGDSLGNVIQGDKNTLDVSMSDMIYHMQAVAKGTQNALRIADMPYQSYTYAEQTLTNAKRLIMAGAQMVKLEGGCEHEASFRILQGNDISVCGHLGLQPQSVVEIDGYRVQGRGKQGANKIIKNALALASWGVKVIVLECVPAELAKQVSQSVSIPIIGIGAGLDCDGQVLVSYDMLGVHVRHVPRFVKNFLTDNGDVKSAVNAFIKAVKDKSFPSKKYSY</sequence>
<accession>A5CX20</accession>
<keyword id="KW-0963">Cytoplasm</keyword>
<keyword id="KW-0460">Magnesium</keyword>
<keyword id="KW-0479">Metal-binding</keyword>
<keyword id="KW-0566">Pantothenate biosynthesis</keyword>
<keyword id="KW-1185">Reference proteome</keyword>
<keyword id="KW-0808">Transferase</keyword>
<gene>
    <name evidence="1" type="primary">panB</name>
    <name type="ordered locus">COSY_0384</name>
</gene>
<feature type="chain" id="PRO_0000297407" description="3-methyl-2-oxobutanoate hydroxymethyltransferase">
    <location>
        <begin position="1"/>
        <end position="260"/>
    </location>
</feature>
<feature type="active site" description="Proton acceptor" evidence="1">
    <location>
        <position position="178"/>
    </location>
</feature>
<feature type="binding site" evidence="1">
    <location>
        <begin position="42"/>
        <end position="43"/>
    </location>
    <ligand>
        <name>3-methyl-2-oxobutanoate</name>
        <dbReference type="ChEBI" id="CHEBI:11851"/>
    </ligand>
</feature>
<feature type="binding site" evidence="1">
    <location>
        <position position="42"/>
    </location>
    <ligand>
        <name>Mg(2+)</name>
        <dbReference type="ChEBI" id="CHEBI:18420"/>
    </ligand>
</feature>
<feature type="binding site" evidence="1">
    <location>
        <position position="81"/>
    </location>
    <ligand>
        <name>3-methyl-2-oxobutanoate</name>
        <dbReference type="ChEBI" id="CHEBI:11851"/>
    </ligand>
</feature>
<feature type="binding site" evidence="1">
    <location>
        <position position="81"/>
    </location>
    <ligand>
        <name>Mg(2+)</name>
        <dbReference type="ChEBI" id="CHEBI:18420"/>
    </ligand>
</feature>
<feature type="binding site" evidence="1">
    <location>
        <position position="109"/>
    </location>
    <ligand>
        <name>3-methyl-2-oxobutanoate</name>
        <dbReference type="ChEBI" id="CHEBI:11851"/>
    </ligand>
</feature>
<feature type="binding site" evidence="1">
    <location>
        <position position="111"/>
    </location>
    <ligand>
        <name>Mg(2+)</name>
        <dbReference type="ChEBI" id="CHEBI:18420"/>
    </ligand>
</feature>
<organism>
    <name type="scientific">Vesicomyosocius okutanii subsp. Calyptogena okutanii (strain HA)</name>
    <dbReference type="NCBI Taxonomy" id="412965"/>
    <lineage>
        <taxon>Bacteria</taxon>
        <taxon>Pseudomonadati</taxon>
        <taxon>Pseudomonadota</taxon>
        <taxon>Gammaproteobacteria</taxon>
        <taxon>Candidatus Pseudothioglobaceae</taxon>
        <taxon>Candidatus Vesicomyosocius</taxon>
    </lineage>
</organism>
<dbReference type="EC" id="2.1.2.11" evidence="1"/>
<dbReference type="EMBL" id="AP009247">
    <property type="protein sequence ID" value="BAF61506.1"/>
    <property type="molecule type" value="Genomic_DNA"/>
</dbReference>
<dbReference type="RefSeq" id="WP_011929776.1">
    <property type="nucleotide sequence ID" value="NC_009465.1"/>
</dbReference>
<dbReference type="SMR" id="A5CX20"/>
<dbReference type="STRING" id="412965.COSY_0384"/>
<dbReference type="KEGG" id="vok:COSY_0384"/>
<dbReference type="eggNOG" id="COG0413">
    <property type="taxonomic scope" value="Bacteria"/>
</dbReference>
<dbReference type="HOGENOM" id="CLU_036645_1_0_6"/>
<dbReference type="OrthoDB" id="9781789at2"/>
<dbReference type="UniPathway" id="UPA00028">
    <property type="reaction ID" value="UER00003"/>
</dbReference>
<dbReference type="Proteomes" id="UP000000247">
    <property type="component" value="Chromosome"/>
</dbReference>
<dbReference type="GO" id="GO:0005737">
    <property type="term" value="C:cytoplasm"/>
    <property type="evidence" value="ECO:0007669"/>
    <property type="project" value="UniProtKB-SubCell"/>
</dbReference>
<dbReference type="GO" id="GO:0003864">
    <property type="term" value="F:3-methyl-2-oxobutanoate hydroxymethyltransferase activity"/>
    <property type="evidence" value="ECO:0007669"/>
    <property type="project" value="UniProtKB-UniRule"/>
</dbReference>
<dbReference type="GO" id="GO:0000287">
    <property type="term" value="F:magnesium ion binding"/>
    <property type="evidence" value="ECO:0007669"/>
    <property type="project" value="TreeGrafter"/>
</dbReference>
<dbReference type="GO" id="GO:0015940">
    <property type="term" value="P:pantothenate biosynthetic process"/>
    <property type="evidence" value="ECO:0007669"/>
    <property type="project" value="UniProtKB-UniRule"/>
</dbReference>
<dbReference type="CDD" id="cd06557">
    <property type="entry name" value="KPHMT-like"/>
    <property type="match status" value="1"/>
</dbReference>
<dbReference type="FunFam" id="3.20.20.60:FF:000003">
    <property type="entry name" value="3-methyl-2-oxobutanoate hydroxymethyltransferase"/>
    <property type="match status" value="1"/>
</dbReference>
<dbReference type="Gene3D" id="3.20.20.60">
    <property type="entry name" value="Phosphoenolpyruvate-binding domains"/>
    <property type="match status" value="1"/>
</dbReference>
<dbReference type="HAMAP" id="MF_00156">
    <property type="entry name" value="PanB"/>
    <property type="match status" value="1"/>
</dbReference>
<dbReference type="InterPro" id="IPR003700">
    <property type="entry name" value="Pantoate_hydroxy_MeTrfase"/>
</dbReference>
<dbReference type="InterPro" id="IPR015813">
    <property type="entry name" value="Pyrv/PenolPyrv_kinase-like_dom"/>
</dbReference>
<dbReference type="InterPro" id="IPR040442">
    <property type="entry name" value="Pyrv_kinase-like_dom_sf"/>
</dbReference>
<dbReference type="NCBIfam" id="TIGR00222">
    <property type="entry name" value="panB"/>
    <property type="match status" value="1"/>
</dbReference>
<dbReference type="NCBIfam" id="NF001452">
    <property type="entry name" value="PRK00311.1"/>
    <property type="match status" value="1"/>
</dbReference>
<dbReference type="PANTHER" id="PTHR20881">
    <property type="entry name" value="3-METHYL-2-OXOBUTANOATE HYDROXYMETHYLTRANSFERASE"/>
    <property type="match status" value="1"/>
</dbReference>
<dbReference type="PANTHER" id="PTHR20881:SF0">
    <property type="entry name" value="3-METHYL-2-OXOBUTANOATE HYDROXYMETHYLTRANSFERASE"/>
    <property type="match status" value="1"/>
</dbReference>
<dbReference type="Pfam" id="PF02548">
    <property type="entry name" value="Pantoate_transf"/>
    <property type="match status" value="1"/>
</dbReference>
<dbReference type="PIRSF" id="PIRSF000388">
    <property type="entry name" value="Pantoate_hydroxy_MeTrfase"/>
    <property type="match status" value="1"/>
</dbReference>
<dbReference type="SUPFAM" id="SSF51621">
    <property type="entry name" value="Phosphoenolpyruvate/pyruvate domain"/>
    <property type="match status" value="1"/>
</dbReference>
<comment type="function">
    <text evidence="1">Catalyzes the reversible reaction in which hydroxymethyl group from 5,10-methylenetetrahydrofolate is transferred onto alpha-ketoisovalerate to form ketopantoate.</text>
</comment>
<comment type="catalytic activity">
    <reaction evidence="1">
        <text>3-methyl-2-oxobutanoate + (6R)-5,10-methylene-5,6,7,8-tetrahydrofolate + H2O = 2-dehydropantoate + (6S)-5,6,7,8-tetrahydrofolate</text>
        <dbReference type="Rhea" id="RHEA:11824"/>
        <dbReference type="ChEBI" id="CHEBI:11561"/>
        <dbReference type="ChEBI" id="CHEBI:11851"/>
        <dbReference type="ChEBI" id="CHEBI:15377"/>
        <dbReference type="ChEBI" id="CHEBI:15636"/>
        <dbReference type="ChEBI" id="CHEBI:57453"/>
        <dbReference type="EC" id="2.1.2.11"/>
    </reaction>
</comment>
<comment type="cofactor">
    <cofactor evidence="1">
        <name>Mg(2+)</name>
        <dbReference type="ChEBI" id="CHEBI:18420"/>
    </cofactor>
    <text evidence="1">Binds 1 Mg(2+) ion per subunit.</text>
</comment>
<comment type="pathway">
    <text evidence="1">Cofactor biosynthesis; (R)-pantothenate biosynthesis; (R)-pantoate from 3-methyl-2-oxobutanoate: step 1/2.</text>
</comment>
<comment type="subunit">
    <text evidence="1">Homodecamer; pentamer of dimers.</text>
</comment>
<comment type="subcellular location">
    <subcellularLocation>
        <location evidence="1">Cytoplasm</location>
    </subcellularLocation>
</comment>
<comment type="similarity">
    <text evidence="1">Belongs to the PanB family.</text>
</comment>